<name>RR8_PINTH</name>
<dbReference type="EMBL" id="D17510">
    <property type="protein sequence ID" value="BAA04399.1"/>
    <property type="molecule type" value="Genomic_DNA"/>
</dbReference>
<dbReference type="PIR" id="T07521">
    <property type="entry name" value="T07521"/>
</dbReference>
<dbReference type="RefSeq" id="NP_042442.1">
    <property type="nucleotide sequence ID" value="NC_001631.1"/>
</dbReference>
<dbReference type="SMR" id="P41634"/>
<dbReference type="GeneID" id="809051"/>
<dbReference type="GO" id="GO:0009507">
    <property type="term" value="C:chloroplast"/>
    <property type="evidence" value="ECO:0007669"/>
    <property type="project" value="UniProtKB-SubCell"/>
</dbReference>
<dbReference type="GO" id="GO:1990904">
    <property type="term" value="C:ribonucleoprotein complex"/>
    <property type="evidence" value="ECO:0007669"/>
    <property type="project" value="UniProtKB-KW"/>
</dbReference>
<dbReference type="GO" id="GO:0005840">
    <property type="term" value="C:ribosome"/>
    <property type="evidence" value="ECO:0007669"/>
    <property type="project" value="UniProtKB-KW"/>
</dbReference>
<dbReference type="GO" id="GO:0019843">
    <property type="term" value="F:rRNA binding"/>
    <property type="evidence" value="ECO:0007669"/>
    <property type="project" value="UniProtKB-UniRule"/>
</dbReference>
<dbReference type="GO" id="GO:0003735">
    <property type="term" value="F:structural constituent of ribosome"/>
    <property type="evidence" value="ECO:0007669"/>
    <property type="project" value="InterPro"/>
</dbReference>
<dbReference type="GO" id="GO:0006412">
    <property type="term" value="P:translation"/>
    <property type="evidence" value="ECO:0007669"/>
    <property type="project" value="UniProtKB-UniRule"/>
</dbReference>
<dbReference type="FunFam" id="3.30.1490.10:FF:000001">
    <property type="entry name" value="30S ribosomal protein S8"/>
    <property type="match status" value="1"/>
</dbReference>
<dbReference type="Gene3D" id="3.30.1370.30">
    <property type="match status" value="1"/>
</dbReference>
<dbReference type="Gene3D" id="3.30.1490.10">
    <property type="match status" value="1"/>
</dbReference>
<dbReference type="HAMAP" id="MF_01302_B">
    <property type="entry name" value="Ribosomal_uS8_B"/>
    <property type="match status" value="1"/>
</dbReference>
<dbReference type="InterPro" id="IPR000630">
    <property type="entry name" value="Ribosomal_uS8"/>
</dbReference>
<dbReference type="InterPro" id="IPR047863">
    <property type="entry name" value="Ribosomal_uS8_CS"/>
</dbReference>
<dbReference type="InterPro" id="IPR035987">
    <property type="entry name" value="Ribosomal_uS8_sf"/>
</dbReference>
<dbReference type="NCBIfam" id="NF001109">
    <property type="entry name" value="PRK00136.1"/>
    <property type="match status" value="1"/>
</dbReference>
<dbReference type="PANTHER" id="PTHR11758">
    <property type="entry name" value="40S RIBOSOMAL PROTEIN S15A"/>
    <property type="match status" value="1"/>
</dbReference>
<dbReference type="Pfam" id="PF00410">
    <property type="entry name" value="Ribosomal_S8"/>
    <property type="match status" value="1"/>
</dbReference>
<dbReference type="SUPFAM" id="SSF56047">
    <property type="entry name" value="Ribosomal protein S8"/>
    <property type="match status" value="1"/>
</dbReference>
<dbReference type="PROSITE" id="PS00053">
    <property type="entry name" value="RIBOSOMAL_S8"/>
    <property type="match status" value="1"/>
</dbReference>
<sequence length="132" mass="15144">MGNDTITNLITSIRNADMVEKGTVRVTATNITKNIGRILLREGFIEDVREHQEGQKYFLISTSKYRRRKKRTYMTTSKRTSKPGLRIYSNYREIPKVLGGMGIVILSTSQGILTDREARQKKIGGEILCYVW</sequence>
<accession>P41634</accession>
<geneLocation type="chloroplast"/>
<evidence type="ECO:0000250" key="1"/>
<evidence type="ECO:0000305" key="2"/>
<feature type="chain" id="PRO_0000126590" description="Small ribosomal subunit protein uS8c">
    <location>
        <begin position="1"/>
        <end position="132"/>
    </location>
</feature>
<gene>
    <name type="primary">rps8</name>
</gene>
<reference key="1">
    <citation type="journal article" date="1994" name="Proc. Natl. Acad. Sci. U.S.A.">
        <title>Loss of all ndh genes as determined by sequencing the entire chloroplast genome of the black pine Pinus thunbergii.</title>
        <authorList>
            <person name="Wakasugi T."/>
            <person name="Tsudzuki J."/>
            <person name="Ito S."/>
            <person name="Nakashima K."/>
            <person name="Tsudzuki T."/>
            <person name="Sugiura M."/>
        </authorList>
    </citation>
    <scope>NUCLEOTIDE SEQUENCE [LARGE SCALE GENOMIC DNA]</scope>
</reference>
<keyword id="KW-0150">Chloroplast</keyword>
<keyword id="KW-0934">Plastid</keyword>
<keyword id="KW-0687">Ribonucleoprotein</keyword>
<keyword id="KW-0689">Ribosomal protein</keyword>
<keyword id="KW-0694">RNA-binding</keyword>
<keyword id="KW-0699">rRNA-binding</keyword>
<organism>
    <name type="scientific">Pinus thunbergii</name>
    <name type="common">Japanese black pine</name>
    <name type="synonym">Pinus thunbergiana</name>
    <dbReference type="NCBI Taxonomy" id="3350"/>
    <lineage>
        <taxon>Eukaryota</taxon>
        <taxon>Viridiplantae</taxon>
        <taxon>Streptophyta</taxon>
        <taxon>Embryophyta</taxon>
        <taxon>Tracheophyta</taxon>
        <taxon>Spermatophyta</taxon>
        <taxon>Pinopsida</taxon>
        <taxon>Pinidae</taxon>
        <taxon>Conifers I</taxon>
        <taxon>Pinales</taxon>
        <taxon>Pinaceae</taxon>
        <taxon>Pinus</taxon>
        <taxon>Pinus subgen. Pinus</taxon>
    </lineage>
</organism>
<protein>
    <recommendedName>
        <fullName evidence="2">Small ribosomal subunit protein uS8c</fullName>
    </recommendedName>
    <alternativeName>
        <fullName>30S ribosomal protein S8, chloroplastic</fullName>
    </alternativeName>
</protein>
<comment type="function">
    <text evidence="1">One of the primary rRNA binding proteins, it binds directly to 16S rRNA central domain where it helps coordinate assembly of the platform of the 30S subunit.</text>
</comment>
<comment type="subunit">
    <text evidence="1">Part of the 30S ribosomal subunit.</text>
</comment>
<comment type="subcellular location">
    <subcellularLocation>
        <location>Plastid</location>
        <location>Chloroplast</location>
    </subcellularLocation>
</comment>
<comment type="similarity">
    <text evidence="2">Belongs to the universal ribosomal protein uS8 family.</text>
</comment>
<proteinExistence type="inferred from homology"/>